<accession>P9WGJ6</accession>
<accession>L0TCN5</accession>
<accession>Q50723</accession>
<gene>
    <name type="ordered locus">MT3510</name>
</gene>
<feature type="chain" id="PRO_0000428350" description="Protein MT3510">
    <location>
        <begin position="1"/>
        <end position="412"/>
    </location>
</feature>
<feature type="modified residue" description="N6-(pyridoxal phosphate)lysine" evidence="1">
    <location>
        <position position="227"/>
    </location>
</feature>
<reference key="1">
    <citation type="journal article" date="2002" name="J. Bacteriol.">
        <title>Whole-genome comparison of Mycobacterium tuberculosis clinical and laboratory strains.</title>
        <authorList>
            <person name="Fleischmann R.D."/>
            <person name="Alland D."/>
            <person name="Eisen J.A."/>
            <person name="Carpenter L."/>
            <person name="White O."/>
            <person name="Peterson J.D."/>
            <person name="DeBoy R.T."/>
            <person name="Dodson R.J."/>
            <person name="Gwinn M.L."/>
            <person name="Haft D.H."/>
            <person name="Hickey E.K."/>
            <person name="Kolonay J.F."/>
            <person name="Nelson W.C."/>
            <person name="Umayam L.A."/>
            <person name="Ermolaeva M.D."/>
            <person name="Salzberg S.L."/>
            <person name="Delcher A."/>
            <person name="Utterback T.R."/>
            <person name="Weidman J.F."/>
            <person name="Khouri H.M."/>
            <person name="Gill J."/>
            <person name="Mikula A."/>
            <person name="Bishai W."/>
            <person name="Jacobs W.R. Jr."/>
            <person name="Venter J.C."/>
            <person name="Fraser C.M."/>
        </authorList>
    </citation>
    <scope>NUCLEOTIDE SEQUENCE [LARGE SCALE GENOMIC DNA]</scope>
    <source>
        <strain>CDC 1551 / Oshkosh</strain>
    </source>
</reference>
<sequence>MKIRTLSGSVLEPPSAVRATPGTSMLKLEPGGSTIPKIPFIRPSFPGPAELAEDFVQIAQANWYTNFGPNERRFARALRDYLGPHLHVATLANGTLALLAALHVSFGAGTRDRYLLMPSFTFVGVAQAALWTGYRPWFIDIDANTWQPCVHSARAVIERFRDRIAGILLANVFGVGNPQISVWEELAAEWELPIVLDSAAGFGSTYADGERLGGRGACEIFSFHATKPFAVGEGGALVSRDPRLVEHAYKFQNFGLVQTRESIQLGMNGKLSEISAAIGLRQLVGLDRRLASRRKVLECYRTGMADAGVRFQDNANVASLCFASACCTSADHKAAVLGSLRRHAIEARDYYNPPQHRHPYFVTNAELVESTDLAVTADICSRIVSLPVHDHMAPDDVARVVAAVQEAEVRGE</sequence>
<keyword id="KW-0663">Pyridoxal phosphate</keyword>
<keyword id="KW-1185">Reference proteome</keyword>
<proteinExistence type="inferred from homology"/>
<name>Y3402_MYCTO</name>
<evidence type="ECO:0000250" key="1"/>
<evidence type="ECO:0000305" key="2"/>
<dbReference type="EMBL" id="AE000516">
    <property type="protein sequence ID" value="AAK47847.1"/>
    <property type="molecule type" value="Genomic_DNA"/>
</dbReference>
<dbReference type="PIR" id="G70735">
    <property type="entry name" value="G70735"/>
</dbReference>
<dbReference type="RefSeq" id="WP_003900048.1">
    <property type="nucleotide sequence ID" value="NZ_KK341227.1"/>
</dbReference>
<dbReference type="SMR" id="P9WGJ6"/>
<dbReference type="KEGG" id="mtc:MT3510"/>
<dbReference type="PATRIC" id="fig|83331.31.peg.3768"/>
<dbReference type="HOGENOM" id="CLU_033332_1_1_11"/>
<dbReference type="Proteomes" id="UP000001020">
    <property type="component" value="Chromosome"/>
</dbReference>
<dbReference type="GO" id="GO:0030170">
    <property type="term" value="F:pyridoxal phosphate binding"/>
    <property type="evidence" value="ECO:0007669"/>
    <property type="project" value="TreeGrafter"/>
</dbReference>
<dbReference type="GO" id="GO:0008483">
    <property type="term" value="F:transaminase activity"/>
    <property type="evidence" value="ECO:0007669"/>
    <property type="project" value="TreeGrafter"/>
</dbReference>
<dbReference type="GO" id="GO:0000271">
    <property type="term" value="P:polysaccharide biosynthetic process"/>
    <property type="evidence" value="ECO:0007669"/>
    <property type="project" value="TreeGrafter"/>
</dbReference>
<dbReference type="CDD" id="cd00616">
    <property type="entry name" value="AHBA_syn"/>
    <property type="match status" value="1"/>
</dbReference>
<dbReference type="Gene3D" id="3.40.640.10">
    <property type="entry name" value="Type I PLP-dependent aspartate aminotransferase-like (Major domain)"/>
    <property type="match status" value="1"/>
</dbReference>
<dbReference type="InterPro" id="IPR000653">
    <property type="entry name" value="DegT/StrS_aminotransferase"/>
</dbReference>
<dbReference type="InterPro" id="IPR015424">
    <property type="entry name" value="PyrdxlP-dep_Trfase"/>
</dbReference>
<dbReference type="InterPro" id="IPR015421">
    <property type="entry name" value="PyrdxlP-dep_Trfase_major"/>
</dbReference>
<dbReference type="PANTHER" id="PTHR30244:SF9">
    <property type="entry name" value="PROTEIN RV3402C"/>
    <property type="match status" value="1"/>
</dbReference>
<dbReference type="PANTHER" id="PTHR30244">
    <property type="entry name" value="TRANSAMINASE"/>
    <property type="match status" value="1"/>
</dbReference>
<dbReference type="Pfam" id="PF01041">
    <property type="entry name" value="DegT_DnrJ_EryC1"/>
    <property type="match status" value="1"/>
</dbReference>
<dbReference type="PIRSF" id="PIRSF000390">
    <property type="entry name" value="PLP_StrS"/>
    <property type="match status" value="1"/>
</dbReference>
<dbReference type="SUPFAM" id="SSF53383">
    <property type="entry name" value="PLP-dependent transferases"/>
    <property type="match status" value="1"/>
</dbReference>
<protein>
    <recommendedName>
        <fullName>Protein MT3510</fullName>
    </recommendedName>
</protein>
<comment type="similarity">
    <text evidence="2">Belongs to the DegT/DnrJ/EryC1 family.</text>
</comment>
<organism>
    <name type="scientific">Mycobacterium tuberculosis (strain CDC 1551 / Oshkosh)</name>
    <dbReference type="NCBI Taxonomy" id="83331"/>
    <lineage>
        <taxon>Bacteria</taxon>
        <taxon>Bacillati</taxon>
        <taxon>Actinomycetota</taxon>
        <taxon>Actinomycetes</taxon>
        <taxon>Mycobacteriales</taxon>
        <taxon>Mycobacteriaceae</taxon>
        <taxon>Mycobacterium</taxon>
        <taxon>Mycobacterium tuberculosis complex</taxon>
    </lineage>
</organism>